<protein>
    <recommendedName>
        <fullName evidence="1">1-deoxy-D-xylulose 5-phosphate reductoisomerase</fullName>
        <shortName evidence="1">DXP reductoisomerase</shortName>
        <ecNumber evidence="1">1.1.1.267</ecNumber>
    </recommendedName>
    <alternativeName>
        <fullName evidence="1">1-deoxyxylulose-5-phosphate reductoisomerase</fullName>
    </alternativeName>
    <alternativeName>
        <fullName evidence="1">2-C-methyl-D-erythritol 4-phosphate synthase</fullName>
    </alternativeName>
</protein>
<name>DXR_SHESA</name>
<organism>
    <name type="scientific">Shewanella sp. (strain ANA-3)</name>
    <dbReference type="NCBI Taxonomy" id="94122"/>
    <lineage>
        <taxon>Bacteria</taxon>
        <taxon>Pseudomonadati</taxon>
        <taxon>Pseudomonadota</taxon>
        <taxon>Gammaproteobacteria</taxon>
        <taxon>Alteromonadales</taxon>
        <taxon>Shewanellaceae</taxon>
        <taxon>Shewanella</taxon>
    </lineage>
</organism>
<reference key="1">
    <citation type="submission" date="2006-09" db="EMBL/GenBank/DDBJ databases">
        <title>Complete sequence of chromosome 1 of Shewanella sp. ANA-3.</title>
        <authorList>
            <person name="Copeland A."/>
            <person name="Lucas S."/>
            <person name="Lapidus A."/>
            <person name="Barry K."/>
            <person name="Detter J.C."/>
            <person name="Glavina del Rio T."/>
            <person name="Hammon N."/>
            <person name="Israni S."/>
            <person name="Dalin E."/>
            <person name="Tice H."/>
            <person name="Pitluck S."/>
            <person name="Chertkov O."/>
            <person name="Brettin T."/>
            <person name="Bruce D."/>
            <person name="Han C."/>
            <person name="Tapia R."/>
            <person name="Gilna P."/>
            <person name="Schmutz J."/>
            <person name="Larimer F."/>
            <person name="Land M."/>
            <person name="Hauser L."/>
            <person name="Kyrpides N."/>
            <person name="Kim E."/>
            <person name="Newman D."/>
            <person name="Salticov C."/>
            <person name="Konstantinidis K."/>
            <person name="Klappenback J."/>
            <person name="Tiedje J."/>
            <person name="Richardson P."/>
        </authorList>
    </citation>
    <scope>NUCLEOTIDE SEQUENCE [LARGE SCALE GENOMIC DNA]</scope>
    <source>
        <strain>ANA-3</strain>
    </source>
</reference>
<evidence type="ECO:0000255" key="1">
    <source>
        <dbReference type="HAMAP-Rule" id="MF_00183"/>
    </source>
</evidence>
<feature type="chain" id="PRO_1000020310" description="1-deoxy-D-xylulose 5-phosphate reductoisomerase">
    <location>
        <begin position="1"/>
        <end position="396"/>
    </location>
</feature>
<feature type="binding site" evidence="1">
    <location>
        <position position="10"/>
    </location>
    <ligand>
        <name>NADPH</name>
        <dbReference type="ChEBI" id="CHEBI:57783"/>
    </ligand>
</feature>
<feature type="binding site" evidence="1">
    <location>
        <position position="11"/>
    </location>
    <ligand>
        <name>NADPH</name>
        <dbReference type="ChEBI" id="CHEBI:57783"/>
    </ligand>
</feature>
<feature type="binding site" evidence="1">
    <location>
        <position position="12"/>
    </location>
    <ligand>
        <name>NADPH</name>
        <dbReference type="ChEBI" id="CHEBI:57783"/>
    </ligand>
</feature>
<feature type="binding site" evidence="1">
    <location>
        <position position="13"/>
    </location>
    <ligand>
        <name>NADPH</name>
        <dbReference type="ChEBI" id="CHEBI:57783"/>
    </ligand>
</feature>
<feature type="binding site" evidence="1">
    <location>
        <position position="123"/>
    </location>
    <ligand>
        <name>NADPH</name>
        <dbReference type="ChEBI" id="CHEBI:57783"/>
    </ligand>
</feature>
<feature type="binding site" evidence="1">
    <location>
        <position position="124"/>
    </location>
    <ligand>
        <name>1-deoxy-D-xylulose 5-phosphate</name>
        <dbReference type="ChEBI" id="CHEBI:57792"/>
    </ligand>
</feature>
<feature type="binding site" evidence="1">
    <location>
        <position position="125"/>
    </location>
    <ligand>
        <name>NADPH</name>
        <dbReference type="ChEBI" id="CHEBI:57783"/>
    </ligand>
</feature>
<feature type="binding site" evidence="1">
    <location>
        <position position="149"/>
    </location>
    <ligand>
        <name>Mn(2+)</name>
        <dbReference type="ChEBI" id="CHEBI:29035"/>
    </ligand>
</feature>
<feature type="binding site" evidence="1">
    <location>
        <position position="150"/>
    </location>
    <ligand>
        <name>1-deoxy-D-xylulose 5-phosphate</name>
        <dbReference type="ChEBI" id="CHEBI:57792"/>
    </ligand>
</feature>
<feature type="binding site" evidence="1">
    <location>
        <position position="151"/>
    </location>
    <ligand>
        <name>1-deoxy-D-xylulose 5-phosphate</name>
        <dbReference type="ChEBI" id="CHEBI:57792"/>
    </ligand>
</feature>
<feature type="binding site" evidence="1">
    <location>
        <position position="151"/>
    </location>
    <ligand>
        <name>Mn(2+)</name>
        <dbReference type="ChEBI" id="CHEBI:29035"/>
    </ligand>
</feature>
<feature type="binding site" evidence="1">
    <location>
        <position position="185"/>
    </location>
    <ligand>
        <name>1-deoxy-D-xylulose 5-phosphate</name>
        <dbReference type="ChEBI" id="CHEBI:57792"/>
    </ligand>
</feature>
<feature type="binding site" evidence="1">
    <location>
        <position position="208"/>
    </location>
    <ligand>
        <name>1-deoxy-D-xylulose 5-phosphate</name>
        <dbReference type="ChEBI" id="CHEBI:57792"/>
    </ligand>
</feature>
<feature type="binding site" evidence="1">
    <location>
        <position position="214"/>
    </location>
    <ligand>
        <name>NADPH</name>
        <dbReference type="ChEBI" id="CHEBI:57783"/>
    </ligand>
</feature>
<feature type="binding site" evidence="1">
    <location>
        <position position="221"/>
    </location>
    <ligand>
        <name>1-deoxy-D-xylulose 5-phosphate</name>
        <dbReference type="ChEBI" id="CHEBI:57792"/>
    </ligand>
</feature>
<feature type="binding site" evidence="1">
    <location>
        <position position="226"/>
    </location>
    <ligand>
        <name>1-deoxy-D-xylulose 5-phosphate</name>
        <dbReference type="ChEBI" id="CHEBI:57792"/>
    </ligand>
</feature>
<feature type="binding site" evidence="1">
    <location>
        <position position="227"/>
    </location>
    <ligand>
        <name>1-deoxy-D-xylulose 5-phosphate</name>
        <dbReference type="ChEBI" id="CHEBI:57792"/>
    </ligand>
</feature>
<feature type="binding site" evidence="1">
    <location>
        <position position="230"/>
    </location>
    <ligand>
        <name>1-deoxy-D-xylulose 5-phosphate</name>
        <dbReference type="ChEBI" id="CHEBI:57792"/>
    </ligand>
</feature>
<feature type="binding site" evidence="1">
    <location>
        <position position="230"/>
    </location>
    <ligand>
        <name>Mn(2+)</name>
        <dbReference type="ChEBI" id="CHEBI:29035"/>
    </ligand>
</feature>
<sequence length="396" mass="42099">MQNMVILGATGSIGASTLSVISANPDAYRVYALVANASVDKMLALCVTHRPQVAHMVDSQAALALQAKLPPELNIQVTSGEDELIALVTATEVDTVMAAIVGAAGLVPTLAAVKAGKRVLLANKEALVMSGELFIEATKASGATLLPVDSEHNAIFQCLPEEVQANLGRCDLAASGISHILLTGSGGPFLTAELASLASMTPAQACKHPNWSMGPKISVDSATMMNKGLEFIEARWLFNTQKDQLKVVIHPQSVIHSMVQYRDGSVIAQMGNPDMRTPIAHCMSYPQRIRSGVEPLDFFKVGQLSFCEPDFNRFPCLALAIAACAQGQEATTVLNAANEIAVEAFLQGQIGFTHIAKVNEACLSSVPKRAMTSIDDIIALDAQTRIYAREQLAKFA</sequence>
<keyword id="KW-0414">Isoprene biosynthesis</keyword>
<keyword id="KW-0464">Manganese</keyword>
<keyword id="KW-0479">Metal-binding</keyword>
<keyword id="KW-0521">NADP</keyword>
<keyword id="KW-0560">Oxidoreductase</keyword>
<proteinExistence type="inferred from homology"/>
<comment type="function">
    <text evidence="1">Catalyzes the NADPH-dependent rearrangement and reduction of 1-deoxy-D-xylulose-5-phosphate (DXP) to 2-C-methyl-D-erythritol 4-phosphate (MEP).</text>
</comment>
<comment type="catalytic activity">
    <reaction evidence="1">
        <text>2-C-methyl-D-erythritol 4-phosphate + NADP(+) = 1-deoxy-D-xylulose 5-phosphate + NADPH + H(+)</text>
        <dbReference type="Rhea" id="RHEA:13717"/>
        <dbReference type="ChEBI" id="CHEBI:15378"/>
        <dbReference type="ChEBI" id="CHEBI:57783"/>
        <dbReference type="ChEBI" id="CHEBI:57792"/>
        <dbReference type="ChEBI" id="CHEBI:58262"/>
        <dbReference type="ChEBI" id="CHEBI:58349"/>
        <dbReference type="EC" id="1.1.1.267"/>
    </reaction>
    <physiologicalReaction direction="right-to-left" evidence="1">
        <dbReference type="Rhea" id="RHEA:13719"/>
    </physiologicalReaction>
</comment>
<comment type="cofactor">
    <cofactor evidence="1">
        <name>Mg(2+)</name>
        <dbReference type="ChEBI" id="CHEBI:18420"/>
    </cofactor>
    <cofactor evidence="1">
        <name>Mn(2+)</name>
        <dbReference type="ChEBI" id="CHEBI:29035"/>
    </cofactor>
</comment>
<comment type="pathway">
    <text evidence="1">Isoprenoid biosynthesis; isopentenyl diphosphate biosynthesis via DXP pathway; isopentenyl diphosphate from 1-deoxy-D-xylulose 5-phosphate: step 1/6.</text>
</comment>
<comment type="similarity">
    <text evidence="1">Belongs to the DXR family.</text>
</comment>
<accession>A0KZ17</accession>
<gene>
    <name evidence="1" type="primary">dxr</name>
    <name type="ordered locus">Shewana3_2809</name>
</gene>
<dbReference type="EC" id="1.1.1.267" evidence="1"/>
<dbReference type="EMBL" id="CP000469">
    <property type="protein sequence ID" value="ABK49036.1"/>
    <property type="molecule type" value="Genomic_DNA"/>
</dbReference>
<dbReference type="RefSeq" id="WP_011717687.1">
    <property type="nucleotide sequence ID" value="NC_008577.1"/>
</dbReference>
<dbReference type="SMR" id="A0KZ17"/>
<dbReference type="STRING" id="94122.Shewana3_2809"/>
<dbReference type="KEGG" id="shn:Shewana3_2809"/>
<dbReference type="eggNOG" id="COG0743">
    <property type="taxonomic scope" value="Bacteria"/>
</dbReference>
<dbReference type="HOGENOM" id="CLU_035714_4_0_6"/>
<dbReference type="OrthoDB" id="9806546at2"/>
<dbReference type="UniPathway" id="UPA00056">
    <property type="reaction ID" value="UER00092"/>
</dbReference>
<dbReference type="Proteomes" id="UP000002589">
    <property type="component" value="Chromosome"/>
</dbReference>
<dbReference type="GO" id="GO:0030604">
    <property type="term" value="F:1-deoxy-D-xylulose-5-phosphate reductoisomerase activity"/>
    <property type="evidence" value="ECO:0007669"/>
    <property type="project" value="UniProtKB-UniRule"/>
</dbReference>
<dbReference type="GO" id="GO:0030145">
    <property type="term" value="F:manganese ion binding"/>
    <property type="evidence" value="ECO:0007669"/>
    <property type="project" value="TreeGrafter"/>
</dbReference>
<dbReference type="GO" id="GO:0070402">
    <property type="term" value="F:NADPH binding"/>
    <property type="evidence" value="ECO:0007669"/>
    <property type="project" value="InterPro"/>
</dbReference>
<dbReference type="GO" id="GO:0051484">
    <property type="term" value="P:isopentenyl diphosphate biosynthetic process, methylerythritol 4-phosphate pathway involved in terpenoid biosynthetic process"/>
    <property type="evidence" value="ECO:0007669"/>
    <property type="project" value="TreeGrafter"/>
</dbReference>
<dbReference type="FunFam" id="1.10.1740.10:FF:000004">
    <property type="entry name" value="1-deoxy-D-xylulose 5-phosphate reductoisomerase"/>
    <property type="match status" value="1"/>
</dbReference>
<dbReference type="FunFam" id="3.40.50.720:FF:000045">
    <property type="entry name" value="1-deoxy-D-xylulose 5-phosphate reductoisomerase"/>
    <property type="match status" value="1"/>
</dbReference>
<dbReference type="Gene3D" id="1.10.1740.10">
    <property type="match status" value="1"/>
</dbReference>
<dbReference type="Gene3D" id="3.40.50.720">
    <property type="entry name" value="NAD(P)-binding Rossmann-like Domain"/>
    <property type="match status" value="1"/>
</dbReference>
<dbReference type="HAMAP" id="MF_00183">
    <property type="entry name" value="DXP_reductoisom"/>
    <property type="match status" value="1"/>
</dbReference>
<dbReference type="InterPro" id="IPR003821">
    <property type="entry name" value="DXP_reductoisomerase"/>
</dbReference>
<dbReference type="InterPro" id="IPR013644">
    <property type="entry name" value="DXP_reductoisomerase_C"/>
</dbReference>
<dbReference type="InterPro" id="IPR013512">
    <property type="entry name" value="DXP_reductoisomerase_N"/>
</dbReference>
<dbReference type="InterPro" id="IPR026877">
    <property type="entry name" value="DXPR_C"/>
</dbReference>
<dbReference type="InterPro" id="IPR036169">
    <property type="entry name" value="DXPR_C_sf"/>
</dbReference>
<dbReference type="InterPro" id="IPR036291">
    <property type="entry name" value="NAD(P)-bd_dom_sf"/>
</dbReference>
<dbReference type="NCBIfam" id="TIGR00243">
    <property type="entry name" value="Dxr"/>
    <property type="match status" value="1"/>
</dbReference>
<dbReference type="NCBIfam" id="NF003938">
    <property type="entry name" value="PRK05447.1-1"/>
    <property type="match status" value="1"/>
</dbReference>
<dbReference type="NCBIfam" id="NF009114">
    <property type="entry name" value="PRK12464.1"/>
    <property type="match status" value="1"/>
</dbReference>
<dbReference type="PANTHER" id="PTHR30525">
    <property type="entry name" value="1-DEOXY-D-XYLULOSE 5-PHOSPHATE REDUCTOISOMERASE"/>
    <property type="match status" value="1"/>
</dbReference>
<dbReference type="PANTHER" id="PTHR30525:SF0">
    <property type="entry name" value="1-DEOXY-D-XYLULOSE 5-PHOSPHATE REDUCTOISOMERASE, CHLOROPLASTIC"/>
    <property type="match status" value="1"/>
</dbReference>
<dbReference type="Pfam" id="PF08436">
    <property type="entry name" value="DXP_redisom_C"/>
    <property type="match status" value="1"/>
</dbReference>
<dbReference type="Pfam" id="PF02670">
    <property type="entry name" value="DXP_reductoisom"/>
    <property type="match status" value="1"/>
</dbReference>
<dbReference type="Pfam" id="PF13288">
    <property type="entry name" value="DXPR_C"/>
    <property type="match status" value="1"/>
</dbReference>
<dbReference type="PIRSF" id="PIRSF006205">
    <property type="entry name" value="Dxp_reductismrs"/>
    <property type="match status" value="1"/>
</dbReference>
<dbReference type="SUPFAM" id="SSF69055">
    <property type="entry name" value="1-deoxy-D-xylulose-5-phosphate reductoisomerase, C-terminal domain"/>
    <property type="match status" value="1"/>
</dbReference>
<dbReference type="SUPFAM" id="SSF55347">
    <property type="entry name" value="Glyceraldehyde-3-phosphate dehydrogenase-like, C-terminal domain"/>
    <property type="match status" value="1"/>
</dbReference>
<dbReference type="SUPFAM" id="SSF51735">
    <property type="entry name" value="NAD(P)-binding Rossmann-fold domains"/>
    <property type="match status" value="1"/>
</dbReference>